<keyword id="KW-0131">Cell cycle</keyword>
<keyword id="KW-0132">Cell division</keyword>
<keyword id="KW-0997">Cell inner membrane</keyword>
<keyword id="KW-1003">Cell membrane</keyword>
<keyword id="KW-0133">Cell shape</keyword>
<keyword id="KW-0961">Cell wall biogenesis/degradation</keyword>
<keyword id="KW-0328">Glycosyltransferase</keyword>
<keyword id="KW-0472">Membrane</keyword>
<keyword id="KW-0573">Peptidoglycan synthesis</keyword>
<keyword id="KW-0808">Transferase</keyword>
<reference key="1">
    <citation type="journal article" date="2007" name="PLoS Genet.">
        <title>Genome analysis of Minibacterium massiliensis highlights the convergent evolution of water-living bacteria.</title>
        <authorList>
            <person name="Audic S."/>
            <person name="Robert C."/>
            <person name="Campagna B."/>
            <person name="Parinello H."/>
            <person name="Claverie J.-M."/>
            <person name="Raoult D."/>
            <person name="Drancourt M."/>
        </authorList>
    </citation>
    <scope>NUCLEOTIDE SEQUENCE [LARGE SCALE GENOMIC DNA]</scope>
    <source>
        <strain>Marseille</strain>
    </source>
</reference>
<protein>
    <recommendedName>
        <fullName evidence="1">UDP-N-acetylglucosamine--N-acetylmuramyl-(pentapeptide) pyrophosphoryl-undecaprenol N-acetylglucosamine transferase</fullName>
        <ecNumber evidence="1">2.4.1.227</ecNumber>
    </recommendedName>
    <alternativeName>
        <fullName evidence="1">Undecaprenyl-PP-MurNAc-pentapeptide-UDPGlcNAc GlcNAc transferase</fullName>
    </alternativeName>
</protein>
<proteinExistence type="inferred from homology"/>
<comment type="function">
    <text evidence="1">Cell wall formation. Catalyzes the transfer of a GlcNAc subunit on undecaprenyl-pyrophosphoryl-MurNAc-pentapeptide (lipid intermediate I) to form undecaprenyl-pyrophosphoryl-MurNAc-(pentapeptide)GlcNAc (lipid intermediate II).</text>
</comment>
<comment type="catalytic activity">
    <reaction evidence="1">
        <text>di-trans,octa-cis-undecaprenyl diphospho-N-acetyl-alpha-D-muramoyl-L-alanyl-D-glutamyl-meso-2,6-diaminopimeloyl-D-alanyl-D-alanine + UDP-N-acetyl-alpha-D-glucosamine = di-trans,octa-cis-undecaprenyl diphospho-[N-acetyl-alpha-D-glucosaminyl-(1-&gt;4)]-N-acetyl-alpha-D-muramoyl-L-alanyl-D-glutamyl-meso-2,6-diaminopimeloyl-D-alanyl-D-alanine + UDP + H(+)</text>
        <dbReference type="Rhea" id="RHEA:31227"/>
        <dbReference type="ChEBI" id="CHEBI:15378"/>
        <dbReference type="ChEBI" id="CHEBI:57705"/>
        <dbReference type="ChEBI" id="CHEBI:58223"/>
        <dbReference type="ChEBI" id="CHEBI:61387"/>
        <dbReference type="ChEBI" id="CHEBI:61388"/>
        <dbReference type="EC" id="2.4.1.227"/>
    </reaction>
</comment>
<comment type="pathway">
    <text evidence="1">Cell wall biogenesis; peptidoglycan biosynthesis.</text>
</comment>
<comment type="subcellular location">
    <subcellularLocation>
        <location evidence="1">Cell inner membrane</location>
        <topology evidence="1">Peripheral membrane protein</topology>
        <orientation evidence="1">Cytoplasmic side</orientation>
    </subcellularLocation>
</comment>
<comment type="similarity">
    <text evidence="1">Belongs to the glycosyltransferase 28 family. MurG subfamily.</text>
</comment>
<sequence>MKRLVIMAAGTGGHIFPGLAIAETMKARGWQVSWLGTSHGMERELVPKAGVEMDIIEFSGLRGKGLQHTITGAFKLVASFATCFSILKRRNPGIVLGMGGYVTVPGGWMAKLRGVPVVLVNADAALLLSNKTLMPVAERVLFGFPADFGPAASKALVTGNPVRQEIISLPAPAERYAQHSGPLKVLVVGGSLGAKALNDAMPLALAMLPPEQRPVVTHQSGKKNIDALRANYAQAGVDAEVLDFINDMPRRYAEADLVICRAGAITVSELTAAGVASVLVPLLVSTTTHQRDNALWMEKQNAAIHLPQSELSAQGLAELLQGMTREKCKQMAEAAYANGRRDANAAIADVLEKLVKIT</sequence>
<dbReference type="EC" id="2.4.1.227" evidence="1"/>
<dbReference type="EMBL" id="CP000269">
    <property type="protein sequence ID" value="ABR88988.1"/>
    <property type="molecule type" value="Genomic_DNA"/>
</dbReference>
<dbReference type="RefSeq" id="WP_012080864.1">
    <property type="nucleotide sequence ID" value="NC_009659.1"/>
</dbReference>
<dbReference type="SMR" id="A6T2F8"/>
<dbReference type="STRING" id="375286.mma_3015"/>
<dbReference type="CAZy" id="GT28">
    <property type="family name" value="Glycosyltransferase Family 28"/>
</dbReference>
<dbReference type="KEGG" id="mms:mma_3015"/>
<dbReference type="eggNOG" id="COG0707">
    <property type="taxonomic scope" value="Bacteria"/>
</dbReference>
<dbReference type="HOGENOM" id="CLU_037404_2_0_4"/>
<dbReference type="OrthoDB" id="9808936at2"/>
<dbReference type="UniPathway" id="UPA00219"/>
<dbReference type="Proteomes" id="UP000006388">
    <property type="component" value="Chromosome"/>
</dbReference>
<dbReference type="GO" id="GO:0005886">
    <property type="term" value="C:plasma membrane"/>
    <property type="evidence" value="ECO:0007669"/>
    <property type="project" value="UniProtKB-SubCell"/>
</dbReference>
<dbReference type="GO" id="GO:0051991">
    <property type="term" value="F:UDP-N-acetyl-D-glucosamine:N-acetylmuramoyl-L-alanyl-D-glutamyl-meso-2,6-diaminopimelyl-D-alanyl-D-alanine-diphosphoundecaprenol 4-beta-N-acetylglucosaminlytransferase activity"/>
    <property type="evidence" value="ECO:0007669"/>
    <property type="project" value="RHEA"/>
</dbReference>
<dbReference type="GO" id="GO:0050511">
    <property type="term" value="F:undecaprenyldiphospho-muramoylpentapeptide beta-N-acetylglucosaminyltransferase activity"/>
    <property type="evidence" value="ECO:0007669"/>
    <property type="project" value="UniProtKB-UniRule"/>
</dbReference>
<dbReference type="GO" id="GO:0005975">
    <property type="term" value="P:carbohydrate metabolic process"/>
    <property type="evidence" value="ECO:0007669"/>
    <property type="project" value="InterPro"/>
</dbReference>
<dbReference type="GO" id="GO:0051301">
    <property type="term" value="P:cell division"/>
    <property type="evidence" value="ECO:0007669"/>
    <property type="project" value="UniProtKB-KW"/>
</dbReference>
<dbReference type="GO" id="GO:0071555">
    <property type="term" value="P:cell wall organization"/>
    <property type="evidence" value="ECO:0007669"/>
    <property type="project" value="UniProtKB-KW"/>
</dbReference>
<dbReference type="GO" id="GO:0030259">
    <property type="term" value="P:lipid glycosylation"/>
    <property type="evidence" value="ECO:0007669"/>
    <property type="project" value="UniProtKB-UniRule"/>
</dbReference>
<dbReference type="GO" id="GO:0009252">
    <property type="term" value="P:peptidoglycan biosynthetic process"/>
    <property type="evidence" value="ECO:0007669"/>
    <property type="project" value="UniProtKB-UniRule"/>
</dbReference>
<dbReference type="GO" id="GO:0008360">
    <property type="term" value="P:regulation of cell shape"/>
    <property type="evidence" value="ECO:0007669"/>
    <property type="project" value="UniProtKB-KW"/>
</dbReference>
<dbReference type="CDD" id="cd03785">
    <property type="entry name" value="GT28_MurG"/>
    <property type="match status" value="1"/>
</dbReference>
<dbReference type="Gene3D" id="3.40.50.2000">
    <property type="entry name" value="Glycogen Phosphorylase B"/>
    <property type="match status" value="2"/>
</dbReference>
<dbReference type="HAMAP" id="MF_00033">
    <property type="entry name" value="MurG"/>
    <property type="match status" value="1"/>
</dbReference>
<dbReference type="InterPro" id="IPR006009">
    <property type="entry name" value="GlcNAc_MurG"/>
</dbReference>
<dbReference type="InterPro" id="IPR007235">
    <property type="entry name" value="Glyco_trans_28_C"/>
</dbReference>
<dbReference type="InterPro" id="IPR004276">
    <property type="entry name" value="GlycoTrans_28_N"/>
</dbReference>
<dbReference type="NCBIfam" id="TIGR01133">
    <property type="entry name" value="murG"/>
    <property type="match status" value="1"/>
</dbReference>
<dbReference type="PANTHER" id="PTHR21015:SF22">
    <property type="entry name" value="GLYCOSYLTRANSFERASE"/>
    <property type="match status" value="1"/>
</dbReference>
<dbReference type="PANTHER" id="PTHR21015">
    <property type="entry name" value="UDP-N-ACETYLGLUCOSAMINE--N-ACETYLMURAMYL-(PENTAPEPTIDE) PYROPHOSPHORYL-UNDECAPRENOL N-ACETYLGLUCOSAMINE TRANSFERASE 1"/>
    <property type="match status" value="1"/>
</dbReference>
<dbReference type="Pfam" id="PF04101">
    <property type="entry name" value="Glyco_tran_28_C"/>
    <property type="match status" value="1"/>
</dbReference>
<dbReference type="Pfam" id="PF03033">
    <property type="entry name" value="Glyco_transf_28"/>
    <property type="match status" value="1"/>
</dbReference>
<dbReference type="SUPFAM" id="SSF53756">
    <property type="entry name" value="UDP-Glycosyltransferase/glycogen phosphorylase"/>
    <property type="match status" value="1"/>
</dbReference>
<gene>
    <name evidence="1" type="primary">murG</name>
    <name type="ordered locus">mma_3015</name>
</gene>
<evidence type="ECO:0000255" key="1">
    <source>
        <dbReference type="HAMAP-Rule" id="MF_00033"/>
    </source>
</evidence>
<feature type="chain" id="PRO_0000315105" description="UDP-N-acetylglucosamine--N-acetylmuramyl-(pentapeptide) pyrophosphoryl-undecaprenol N-acetylglucosamine transferase">
    <location>
        <begin position="1"/>
        <end position="358"/>
    </location>
</feature>
<feature type="binding site" evidence="1">
    <location>
        <begin position="11"/>
        <end position="13"/>
    </location>
    <ligand>
        <name>UDP-N-acetyl-alpha-D-glucosamine</name>
        <dbReference type="ChEBI" id="CHEBI:57705"/>
    </ligand>
</feature>
<feature type="binding site" evidence="1">
    <location>
        <position position="163"/>
    </location>
    <ligand>
        <name>UDP-N-acetyl-alpha-D-glucosamine</name>
        <dbReference type="ChEBI" id="CHEBI:57705"/>
    </ligand>
</feature>
<feature type="binding site" evidence="1">
    <location>
        <position position="191"/>
    </location>
    <ligand>
        <name>UDP-N-acetyl-alpha-D-glucosamine</name>
        <dbReference type="ChEBI" id="CHEBI:57705"/>
    </ligand>
</feature>
<feature type="binding site" evidence="1">
    <location>
        <position position="245"/>
    </location>
    <ligand>
        <name>UDP-N-acetyl-alpha-D-glucosamine</name>
        <dbReference type="ChEBI" id="CHEBI:57705"/>
    </ligand>
</feature>
<feature type="binding site" evidence="1">
    <location>
        <position position="290"/>
    </location>
    <ligand>
        <name>UDP-N-acetyl-alpha-D-glucosamine</name>
        <dbReference type="ChEBI" id="CHEBI:57705"/>
    </ligand>
</feature>
<accession>A6T2F8</accession>
<organism>
    <name type="scientific">Janthinobacterium sp. (strain Marseille)</name>
    <name type="common">Minibacterium massiliensis</name>
    <dbReference type="NCBI Taxonomy" id="375286"/>
    <lineage>
        <taxon>Bacteria</taxon>
        <taxon>Pseudomonadati</taxon>
        <taxon>Pseudomonadota</taxon>
        <taxon>Betaproteobacteria</taxon>
        <taxon>Burkholderiales</taxon>
        <taxon>Oxalobacteraceae</taxon>
        <taxon>Janthinobacterium</taxon>
    </lineage>
</organism>
<name>MURG_JANMA</name>